<evidence type="ECO:0000250" key="1"/>
<evidence type="ECO:0000255" key="2"/>
<evidence type="ECO:0000305" key="3"/>
<dbReference type="EMBL" id="AY724891">
    <property type="protein sequence ID" value="AAU21107.1"/>
    <property type="molecule type" value="Genomic_DNA"/>
</dbReference>
<dbReference type="RefSeq" id="NP_001009128.1">
    <property type="nucleotide sequence ID" value="NM_001009128.1"/>
</dbReference>
<dbReference type="RefSeq" id="XP_016800912.1">
    <property type="nucleotide sequence ID" value="XM_016945423.1"/>
</dbReference>
<dbReference type="SMR" id="Q646B2"/>
<dbReference type="FunCoup" id="Q646B2">
    <property type="interactions" value="319"/>
</dbReference>
<dbReference type="STRING" id="9598.ENSPTRP00000054234"/>
<dbReference type="GlyCosmos" id="Q646B2">
    <property type="glycosylation" value="1 site, No reported glycans"/>
</dbReference>
<dbReference type="PaxDb" id="9598-ENSPTRP00000054234"/>
<dbReference type="Ensembl" id="ENSPTRT00000061691.4">
    <property type="protein sequence ID" value="ENSPTRP00000054234.3"/>
    <property type="gene ID" value="ENSPTRG00000032455.4"/>
</dbReference>
<dbReference type="Ensembl" id="ENSPTRT00000088523.1">
    <property type="protein sequence ID" value="ENSPTRP00000091477.1"/>
    <property type="gene ID" value="ENSPTRG00000046366.1"/>
</dbReference>
<dbReference type="GeneID" id="472562"/>
<dbReference type="KEGG" id="ptr:472562"/>
<dbReference type="CTD" id="259287"/>
<dbReference type="VGNC" id="VGNC:8775">
    <property type="gene designation" value="TAS2R41"/>
</dbReference>
<dbReference type="eggNOG" id="ENOG502S2SI">
    <property type="taxonomic scope" value="Eukaryota"/>
</dbReference>
<dbReference type="GeneTree" id="ENSGT01100000263477"/>
<dbReference type="HOGENOM" id="CLU_072337_1_1_1"/>
<dbReference type="InParanoid" id="Q646B2"/>
<dbReference type="OMA" id="FCLQWVG"/>
<dbReference type="OrthoDB" id="10180at9604"/>
<dbReference type="TreeFam" id="TF335891"/>
<dbReference type="Proteomes" id="UP000002277">
    <property type="component" value="Chromosome 7"/>
</dbReference>
<dbReference type="GO" id="GO:0016020">
    <property type="term" value="C:membrane"/>
    <property type="evidence" value="ECO:0000318"/>
    <property type="project" value="GO_Central"/>
</dbReference>
<dbReference type="GO" id="GO:0005886">
    <property type="term" value="C:plasma membrane"/>
    <property type="evidence" value="ECO:0007669"/>
    <property type="project" value="UniProtKB-ARBA"/>
</dbReference>
<dbReference type="GO" id="GO:0033038">
    <property type="term" value="F:bitter taste receptor activity"/>
    <property type="evidence" value="ECO:0007669"/>
    <property type="project" value="InterPro"/>
</dbReference>
<dbReference type="GO" id="GO:0004930">
    <property type="term" value="F:G protein-coupled receptor activity"/>
    <property type="evidence" value="ECO:0007669"/>
    <property type="project" value="UniProtKB-KW"/>
</dbReference>
<dbReference type="CDD" id="cd15018">
    <property type="entry name" value="7tm_TAS2R41-like"/>
    <property type="match status" value="1"/>
</dbReference>
<dbReference type="FunFam" id="1.20.1070.10:FF:000055">
    <property type="entry name" value="Taste receptor type 2"/>
    <property type="match status" value="1"/>
</dbReference>
<dbReference type="Gene3D" id="1.20.1070.10">
    <property type="entry name" value="Rhodopsin 7-helix transmembrane proteins"/>
    <property type="match status" value="1"/>
</dbReference>
<dbReference type="InterPro" id="IPR007960">
    <property type="entry name" value="TAS2R"/>
</dbReference>
<dbReference type="PANTHER" id="PTHR11394">
    <property type="entry name" value="TASTE RECEPTOR TYPE 2"/>
    <property type="match status" value="1"/>
</dbReference>
<dbReference type="PANTHER" id="PTHR11394:SF73">
    <property type="entry name" value="TASTE RECEPTOR TYPE 2 MEMBER 41"/>
    <property type="match status" value="1"/>
</dbReference>
<dbReference type="Pfam" id="PF05296">
    <property type="entry name" value="TAS2R"/>
    <property type="match status" value="1"/>
</dbReference>
<dbReference type="SUPFAM" id="SSF81321">
    <property type="entry name" value="Family A G protein-coupled receptor-like"/>
    <property type="match status" value="1"/>
</dbReference>
<proteinExistence type="inferred from homology"/>
<comment type="function">
    <text evidence="1">Receptor that may play a role in the perception of bitterness and is gustducin-linked. May play a role in sensing the chemical composition of the gastrointestinal content. The activity of this receptor may stimulate alpha gustducin, mediate PLC-beta-2 activation and lead to the gating of TRPM5 (By similarity).</text>
</comment>
<comment type="subcellular location">
    <subcellularLocation>
        <location>Membrane</location>
        <topology>Multi-pass membrane protein</topology>
    </subcellularLocation>
</comment>
<comment type="miscellaneous">
    <text>Most taste cells may be activated by a limited number of bitter compounds; individual taste cells can discriminate among bitter stimuli.</text>
</comment>
<comment type="similarity">
    <text evidence="3">Belongs to the G-protein coupled receptor T2R family.</text>
</comment>
<keyword id="KW-0297">G-protein coupled receptor</keyword>
<keyword id="KW-0325">Glycoprotein</keyword>
<keyword id="KW-0472">Membrane</keyword>
<keyword id="KW-0675">Receptor</keyword>
<keyword id="KW-1185">Reference proteome</keyword>
<keyword id="KW-0716">Sensory transduction</keyword>
<keyword id="KW-0919">Taste</keyword>
<keyword id="KW-0807">Transducer</keyword>
<keyword id="KW-0812">Transmembrane</keyword>
<keyword id="KW-1133">Transmembrane helix</keyword>
<gene>
    <name type="primary">TAS2R41</name>
</gene>
<accession>Q646B2</accession>
<feature type="chain" id="PRO_0000082297" description="Taste receptor type 2 member 41">
    <location>
        <begin position="1"/>
        <end position="307"/>
    </location>
</feature>
<feature type="topological domain" description="Extracellular" evidence="2">
    <location>
        <begin position="1"/>
        <end position="7"/>
    </location>
</feature>
<feature type="transmembrane region" description="Helical; Name=1" evidence="2">
    <location>
        <begin position="8"/>
        <end position="28"/>
    </location>
</feature>
<feature type="topological domain" description="Cytoplasmic" evidence="2">
    <location>
        <begin position="29"/>
        <end position="40"/>
    </location>
</feature>
<feature type="transmembrane region" description="Helical; Name=2" evidence="2">
    <location>
        <begin position="41"/>
        <end position="61"/>
    </location>
</feature>
<feature type="topological domain" description="Extracellular" evidence="2">
    <location>
        <begin position="62"/>
        <end position="88"/>
    </location>
</feature>
<feature type="transmembrane region" description="Helical; Name=3" evidence="2">
    <location>
        <begin position="89"/>
        <end position="109"/>
    </location>
</feature>
<feature type="topological domain" description="Cytoplasmic" evidence="2">
    <location>
        <begin position="110"/>
        <end position="129"/>
    </location>
</feature>
<feature type="transmembrane region" description="Helical; Name=4" evidence="2">
    <location>
        <begin position="130"/>
        <end position="150"/>
    </location>
</feature>
<feature type="topological domain" description="Extracellular" evidence="2">
    <location>
        <begin position="151"/>
        <end position="183"/>
    </location>
</feature>
<feature type="transmembrane region" description="Helical; Name=5" evidence="2">
    <location>
        <begin position="184"/>
        <end position="204"/>
    </location>
</feature>
<feature type="topological domain" description="Cytoplasmic" evidence="2">
    <location>
        <begin position="205"/>
        <end position="234"/>
    </location>
</feature>
<feature type="transmembrane region" description="Helical; Name=6" evidence="2">
    <location>
        <begin position="235"/>
        <end position="255"/>
    </location>
</feature>
<feature type="topological domain" description="Extracellular" evidence="2">
    <location>
        <begin position="256"/>
        <end position="264"/>
    </location>
</feature>
<feature type="transmembrane region" description="Helical; Name=7" evidence="2">
    <location>
        <begin position="265"/>
        <end position="285"/>
    </location>
</feature>
<feature type="topological domain" description="Cytoplasmic" evidence="2">
    <location>
        <begin position="286"/>
        <end position="307"/>
    </location>
</feature>
<feature type="glycosylation site" description="N-linked (GlcNAc...) asparagine" evidence="2">
    <location>
        <position position="167"/>
    </location>
</feature>
<name>T2R41_PANTR</name>
<protein>
    <recommendedName>
        <fullName>Taste receptor type 2 member 41</fullName>
        <shortName>T2R41</shortName>
    </recommendedName>
</protein>
<organism>
    <name type="scientific">Pan troglodytes</name>
    <name type="common">Chimpanzee</name>
    <dbReference type="NCBI Taxonomy" id="9598"/>
    <lineage>
        <taxon>Eukaryota</taxon>
        <taxon>Metazoa</taxon>
        <taxon>Chordata</taxon>
        <taxon>Craniata</taxon>
        <taxon>Vertebrata</taxon>
        <taxon>Euteleostomi</taxon>
        <taxon>Mammalia</taxon>
        <taxon>Eutheria</taxon>
        <taxon>Euarchontoglires</taxon>
        <taxon>Primates</taxon>
        <taxon>Haplorrhini</taxon>
        <taxon>Catarrhini</taxon>
        <taxon>Hominidae</taxon>
        <taxon>Pan</taxon>
    </lineage>
</organism>
<sequence length="307" mass="35982">MQAALTAFFMLLFSLLSLLGIAANGFIVLVLGREWLRYGRLLPLDMILISLGASRFCLQLVGTVHNFYYSAQKVEYSGGLGRQFFHLHWHFLNSATFWFCSWLSVLFCVKIANITHPTFLWLKWRFPGWVPWLLLGSVLISFIITLLFFWVNYPAYQEFLIRKFSVNMTYKWNTRIETYYFPSLKLVIWSIPFSVFLVSIMLLINSLRRHTQRMQHNGHSLQDPSTQAHTRALKSLISFLILYALSFLSLIIDATKFISMQNDFYWPWQIAVYLCISVHPFILIFSNLKLRSVFSQLLLLARGFWVA</sequence>
<reference key="1">
    <citation type="journal article" date="2005" name="Mol. Biol. Evol.">
        <title>Evolution of bitter taste receptors in humans and apes.</title>
        <authorList>
            <person name="Fischer A."/>
            <person name="Gilad Y."/>
            <person name="Man O."/>
            <person name="Paeaebo S."/>
        </authorList>
    </citation>
    <scope>NUCLEOTIDE SEQUENCE [GENOMIC DNA]</scope>
</reference>